<evidence type="ECO:0000250" key="1">
    <source>
        <dbReference type="UniProtKB" id="P43244"/>
    </source>
</evidence>
<evidence type="ECO:0000255" key="2"/>
<evidence type="ECO:0000255" key="3">
    <source>
        <dbReference type="PROSITE-ProRule" id="PRU00130"/>
    </source>
</evidence>
<evidence type="ECO:0000255" key="4">
    <source>
        <dbReference type="PROSITE-ProRule" id="PRU00176"/>
    </source>
</evidence>
<evidence type="ECO:0000256" key="5">
    <source>
        <dbReference type="SAM" id="MobiDB-lite"/>
    </source>
</evidence>
<evidence type="ECO:0000269" key="6">
    <source>
    </source>
</evidence>
<evidence type="ECO:0000269" key="7">
    <source>
    </source>
</evidence>
<evidence type="ECO:0000269" key="8">
    <source>
    </source>
</evidence>
<evidence type="ECO:0000269" key="9">
    <source>
    </source>
</evidence>
<evidence type="ECO:0000269" key="10">
    <source>
    </source>
</evidence>
<evidence type="ECO:0000269" key="11">
    <source>
    </source>
</evidence>
<evidence type="ECO:0000269" key="12">
    <source>
    </source>
</evidence>
<evidence type="ECO:0000269" key="13">
    <source>
    </source>
</evidence>
<evidence type="ECO:0000269" key="14">
    <source>
    </source>
</evidence>
<evidence type="ECO:0000269" key="15">
    <source>
    </source>
</evidence>
<evidence type="ECO:0000269" key="16">
    <source>
    </source>
</evidence>
<evidence type="ECO:0000269" key="17">
    <source>
    </source>
</evidence>
<evidence type="ECO:0000269" key="18">
    <source>
    </source>
</evidence>
<evidence type="ECO:0000269" key="19">
    <source ref="7"/>
</evidence>
<evidence type="ECO:0000303" key="20">
    <source>
    </source>
</evidence>
<evidence type="ECO:0000305" key="21"/>
<evidence type="ECO:0007744" key="22">
    <source>
    </source>
</evidence>
<evidence type="ECO:0007744" key="23">
    <source>
    </source>
</evidence>
<evidence type="ECO:0007744" key="24">
    <source>
    </source>
</evidence>
<evidence type="ECO:0007744" key="25">
    <source>
    </source>
</evidence>
<evidence type="ECO:0007744" key="26">
    <source>
    </source>
</evidence>
<evidence type="ECO:0007744" key="27">
    <source>
    </source>
</evidence>
<evidence type="ECO:0007744" key="28">
    <source>
    </source>
</evidence>
<evidence type="ECO:0007744" key="29">
    <source>
    </source>
</evidence>
<evidence type="ECO:0007744" key="30">
    <source>
    </source>
</evidence>
<evidence type="ECO:0007744" key="31">
    <source>
    </source>
</evidence>
<evidence type="ECO:0007744" key="32">
    <source>
    </source>
</evidence>
<evidence type="ECO:0007744" key="33">
    <source>
    </source>
</evidence>
<evidence type="ECO:0007744" key="34">
    <source>
    </source>
</evidence>
<evidence type="ECO:0007744" key="35">
    <source>
    </source>
</evidence>
<evidence type="ECO:0007744" key="36">
    <source>
    </source>
</evidence>
<evidence type="ECO:0007744" key="37">
    <source>
    </source>
</evidence>
<organism>
    <name type="scientific">Homo sapiens</name>
    <name type="common">Human</name>
    <dbReference type="NCBI Taxonomy" id="9606"/>
    <lineage>
        <taxon>Eukaryota</taxon>
        <taxon>Metazoa</taxon>
        <taxon>Chordata</taxon>
        <taxon>Craniata</taxon>
        <taxon>Vertebrata</taxon>
        <taxon>Euteleostomi</taxon>
        <taxon>Mammalia</taxon>
        <taxon>Eutheria</taxon>
        <taxon>Euarchontoglires</taxon>
        <taxon>Primates</taxon>
        <taxon>Haplorrhini</taxon>
        <taxon>Catarrhini</taxon>
        <taxon>Hominidae</taxon>
        <taxon>Homo</taxon>
    </lineage>
</organism>
<feature type="initiator methionine" description="Removed" evidence="19 31">
    <location>
        <position position="1"/>
    </location>
</feature>
<feature type="chain" id="PRO_0000081622" description="Matrin-3">
    <location>
        <begin position="2"/>
        <end position="847"/>
    </location>
</feature>
<feature type="domain" description="RRM 1" evidence="4">
    <location>
        <begin position="398"/>
        <end position="473"/>
    </location>
</feature>
<feature type="domain" description="RRM 2" evidence="4">
    <location>
        <begin position="496"/>
        <end position="571"/>
    </location>
</feature>
<feature type="zinc finger region" description="Matrin-type" evidence="3">
    <location>
        <begin position="801"/>
        <end position="832"/>
    </location>
</feature>
<feature type="region of interest" description="Disordered" evidence="5">
    <location>
        <begin position="146"/>
        <end position="174"/>
    </location>
</feature>
<feature type="region of interest" description="Disordered" evidence="5">
    <location>
        <begin position="187"/>
        <end position="214"/>
    </location>
</feature>
<feature type="region of interest" description="Disordered" evidence="5">
    <location>
        <begin position="342"/>
        <end position="394"/>
    </location>
</feature>
<feature type="region of interest" description="Disordered" evidence="5">
    <location>
        <begin position="588"/>
        <end position="786"/>
    </location>
</feature>
<feature type="short sequence motif" description="Nuclear localization signal" evidence="2">
    <location>
        <begin position="710"/>
        <end position="718"/>
    </location>
</feature>
<feature type="compositionally biased region" description="Basic and acidic residues" evidence="5">
    <location>
        <begin position="160"/>
        <end position="174"/>
    </location>
</feature>
<feature type="compositionally biased region" description="Basic and acidic residues" evidence="5">
    <location>
        <begin position="201"/>
        <end position="214"/>
    </location>
</feature>
<feature type="compositionally biased region" description="Basic and acidic residues" evidence="5">
    <location>
        <begin position="600"/>
        <end position="643"/>
    </location>
</feature>
<feature type="compositionally biased region" description="Acidic residues" evidence="5">
    <location>
        <begin position="653"/>
        <end position="665"/>
    </location>
</feature>
<feature type="compositionally biased region" description="Low complexity" evidence="5">
    <location>
        <begin position="666"/>
        <end position="676"/>
    </location>
</feature>
<feature type="compositionally biased region" description="Basic and acidic residues" evidence="5">
    <location>
        <begin position="689"/>
        <end position="704"/>
    </location>
</feature>
<feature type="compositionally biased region" description="Basic and acidic residues" evidence="5">
    <location>
        <begin position="767"/>
        <end position="780"/>
    </location>
</feature>
<feature type="modified residue" description="N-acetylserine" evidence="19 31">
    <location>
        <position position="2"/>
    </location>
</feature>
<feature type="modified residue" description="N6-acetyllysine; alternate" evidence="27">
    <location>
        <position position="3"/>
    </location>
</feature>
<feature type="modified residue" description="Phosphoserine" evidence="29 30 32 33">
    <location>
        <position position="4"/>
    </location>
</feature>
<feature type="modified residue" description="Phosphoserine" evidence="30 32">
    <location>
        <position position="9"/>
    </location>
</feature>
<feature type="modified residue" description="Phosphoserine" evidence="32">
    <location>
        <position position="11"/>
    </location>
</feature>
<feature type="modified residue" description="Phosphoserine" evidence="29 32">
    <location>
        <position position="14"/>
    </location>
</feature>
<feature type="modified residue" description="Phosphoserine" evidence="28">
    <location>
        <position position="22"/>
    </location>
</feature>
<feature type="modified residue" description="Phosphoserine" evidence="29">
    <location>
        <position position="41"/>
    </location>
</feature>
<feature type="modified residue" description="Phosphoserine" evidence="28 32">
    <location>
        <position position="118"/>
    </location>
</feature>
<feature type="modified residue" description="Phosphoserine" evidence="32">
    <location>
        <position position="126"/>
    </location>
</feature>
<feature type="modified residue" description="Phosphothreonine" evidence="32 33">
    <location>
        <position position="150"/>
    </location>
</feature>
<feature type="modified residue" description="Phosphoserine" evidence="32">
    <location>
        <position position="157"/>
    </location>
</feature>
<feature type="modified residue" description="Phosphotyrosine" evidence="32">
    <location>
        <position position="158"/>
    </location>
</feature>
<feature type="modified residue" description="Phosphoserine" evidence="32">
    <location>
        <position position="164"/>
    </location>
</feature>
<feature type="modified residue" description="Phosphoserine" evidence="22 23 24 25 26 29 30 32 33">
    <location>
        <position position="188"/>
    </location>
</feature>
<feature type="modified residue" description="Phosphoserine" evidence="26 29 30 32">
    <location>
        <position position="195"/>
    </location>
</feature>
<feature type="modified residue" description="Phosphotyrosine" evidence="32">
    <location>
        <position position="202"/>
    </location>
</feature>
<feature type="modified residue" description="Phosphoserine" evidence="24 29 30 32 33">
    <location>
        <position position="206"/>
    </location>
</feature>
<feature type="modified residue" description="Phosphoserine" evidence="26 29 30">
    <location>
        <position position="208"/>
    </location>
</feature>
<feature type="modified residue" description="Phosphoserine" evidence="32">
    <location>
        <position position="211"/>
    </location>
</feature>
<feature type="modified residue" description="Phosphotyrosine" evidence="30">
    <location>
        <position position="219"/>
    </location>
</feature>
<feature type="modified residue" description="Phosphoserine" evidence="32">
    <location>
        <position position="234"/>
    </location>
</feature>
<feature type="modified residue" description="Phosphoserine" evidence="32">
    <location>
        <position position="264"/>
    </location>
</feature>
<feature type="modified residue" description="Phosphoserine" evidence="32">
    <location>
        <position position="275"/>
    </location>
</feature>
<feature type="modified residue" description="Phosphoserine" evidence="32">
    <location>
        <position position="509"/>
    </location>
</feature>
<feature type="modified residue" description="Phosphoserine" evidence="32">
    <location>
        <position position="511"/>
    </location>
</feature>
<feature type="modified residue" description="N6-acetyllysine; alternate" evidence="27">
    <location>
        <position position="522"/>
    </location>
</feature>
<feature type="modified residue" description="Phosphoserine" evidence="26 29 30 32">
    <location>
        <position position="533"/>
    </location>
</feature>
<feature type="modified residue" description="N6-acetyllysine" evidence="27">
    <location>
        <position position="571"/>
    </location>
</feature>
<feature type="modified residue" description="Phosphoserine" evidence="26 30">
    <location>
        <position position="596"/>
    </location>
</feature>
<feature type="modified residue" description="Phosphoserine" evidence="26 29 30 32 33">
    <location>
        <position position="598"/>
    </location>
</feature>
<feature type="modified residue" description="Phosphoserine" evidence="26 29 30 32 33">
    <location>
        <position position="604"/>
    </location>
</feature>
<feature type="modified residue" description="Phosphoserine" evidence="29">
    <location>
        <position position="606"/>
    </location>
</feature>
<feature type="modified residue" description="Phosphoserine" evidence="33">
    <location>
        <position position="654"/>
    </location>
</feature>
<feature type="modified residue" description="Phosphoserine" evidence="33">
    <location>
        <position position="671"/>
    </location>
</feature>
<feature type="modified residue" description="Phosphoserine" evidence="33">
    <location>
        <position position="673"/>
    </location>
</feature>
<feature type="modified residue" description="Phosphoserine" evidence="33">
    <location>
        <position position="674"/>
    </location>
</feature>
<feature type="modified residue" description="Phosphothreonine" evidence="33">
    <location>
        <position position="679"/>
    </location>
</feature>
<feature type="modified residue" description="Phosphoserine" evidence="29">
    <location>
        <position position="689"/>
    </location>
</feature>
<feature type="modified residue" description="Phosphothreonine" evidence="30">
    <location>
        <position position="741"/>
    </location>
</feature>
<feature type="modified residue" description="Phosphoserine" evidence="30">
    <location>
        <position position="747"/>
    </location>
</feature>
<feature type="modified residue" description="Phosphoserine" evidence="1">
    <location>
        <position position="759"/>
    </location>
</feature>
<feature type="modified residue" description="Phosphoserine" evidence="29 30 32">
    <location>
        <position position="766"/>
    </location>
</feature>
<feature type="modified residue" description="N6-acetyllysine; alternate" evidence="27">
    <location>
        <position position="836"/>
    </location>
</feature>
<feature type="cross-link" description="Glycyl lysine isopeptide (Lys-Gly) (interchain with G-Cter in SUMO2); alternate" evidence="34 35 37">
    <location>
        <position position="3"/>
    </location>
</feature>
<feature type="cross-link" description="Glycyl lysine isopeptide (Lys-Gly) (interchain with G-Cter in SUMO2)" evidence="37">
    <location>
        <position position="132"/>
    </location>
</feature>
<feature type="cross-link" description="Glycyl lysine isopeptide (Lys-Gly) (interchain with G-Cter in SUMO2)" evidence="35 37">
    <location>
        <position position="146"/>
    </location>
</feature>
<feature type="cross-link" description="Glycyl lysine isopeptide (Lys-Gly) (interchain with G-Cter in SUMO2)" evidence="37">
    <location>
        <position position="245"/>
    </location>
</feature>
<feature type="cross-link" description="Glycyl lysine isopeptide (Lys-Gly) (interchain with G-Cter in SUMO2)" evidence="37">
    <location>
        <position position="269"/>
    </location>
</feature>
<feature type="cross-link" description="Glycyl lysine isopeptide (Lys-Gly) (interchain with G-Cter in SUMO2)" evidence="37">
    <location>
        <position position="478"/>
    </location>
</feature>
<feature type="cross-link" description="Glycyl lysine isopeptide (Lys-Gly) (interchain with G-Cter in SUMO2)" evidence="34 36 37">
    <location>
        <position position="487"/>
    </location>
</feature>
<feature type="cross-link" description="Glycyl lysine isopeptide (Lys-Gly) (interchain with G-Cter in SUMO2)" evidence="34 35 36 37">
    <location>
        <position position="491"/>
    </location>
</feature>
<feature type="cross-link" description="Glycyl lysine isopeptide (Lys-Gly) (interchain with G-Cter in SUMO2)" evidence="37">
    <location>
        <position position="515"/>
    </location>
</feature>
<feature type="cross-link" description="Glycyl lysine isopeptide (Lys-Gly) (interchain with G-Cter in SUMO2); alternate" evidence="37">
    <location>
        <position position="522"/>
    </location>
</feature>
<feature type="cross-link" description="Glycyl lysine isopeptide (Lys-Gly) (interchain with G-Cter in SUMO2)" evidence="35 37">
    <location>
        <position position="554"/>
    </location>
</feature>
<feature type="cross-link" description="Glycyl lysine isopeptide (Lys-Gly) (interchain with G-Cter in SUMO2)" evidence="37">
    <location>
        <position position="555"/>
    </location>
</feature>
<feature type="cross-link" description="Glycyl lysine isopeptide (Lys-Gly) (interchain with G-Cter in SUMO2)" evidence="34 35 37">
    <location>
        <position position="617"/>
    </location>
</feature>
<feature type="cross-link" description="Glycyl lysine isopeptide (Lys-Gly) (interchain with G-Cter in SUMO2)" evidence="37">
    <location>
        <position position="630"/>
    </location>
</feature>
<feature type="cross-link" description="Glycyl lysine isopeptide (Lys-Gly) (interchain with G-Cter in SUMO2)" evidence="34 37">
    <location>
        <position position="719"/>
    </location>
</feature>
<feature type="cross-link" description="Glycyl lysine isopeptide (Lys-Gly) (interchain with G-Cter in SUMO2)" evidence="34 37">
    <location>
        <position position="736"/>
    </location>
</feature>
<feature type="cross-link" description="Glycyl lysine isopeptide (Lys-Gly) (interchain with G-Cter in SUMO2)" evidence="37">
    <location>
        <position position="770"/>
    </location>
</feature>
<feature type="cross-link" description="Glycyl lysine isopeptide (Lys-Gly) (interchain with G-Cter in SUMO2); alternate" evidence="37">
    <location>
        <position position="836"/>
    </location>
</feature>
<feature type="splice variant" id="VSP_042624" description="In isoform 2." evidence="20">
    <original>MSKSFQQSSLSRDSQGHGRDLSAAGIGLLAAATQSLSMPASLGRMNQGTARLASLMNLGMSSSLNQQGAHSALSSASTSSHNLQSIFNIGSRGPLPLSSQHRGDADQASNILASFGLSARDLDELSRYPEDKITPENLPQILLQLKRRRTEEGPTLSYGRDGRSATREPPYRVPRDDWEEKRHFRRDSFDDRGPSLNPVLDYDHGSRSQESGYYDRMDYEDDRLRDGERCRDDSFFGETSHNYHKFDSEYERMGRGPGPLQERSLFEKKRGAPPSSNIEDFHGLLPKGYPHLCSICDLPVHSNK</original>
    <variation>MLGAQWRRNQPSRAAE</variation>
    <location>
        <begin position="1"/>
        <end position="304"/>
    </location>
</feature>
<feature type="sequence variant" id="VAR_074067" description="In ALS21; uncertain significance." evidence="11">
    <original>A</original>
    <variation>T</variation>
    <location>
        <position position="72"/>
    </location>
</feature>
<feature type="sequence variant" id="VAR_063421" description="In ALS21; results in increased interaction with TARDBP; dbSNP:rs121434591." evidence="9 10">
    <original>S</original>
    <variation>C</variation>
    <location>
        <position position="85"/>
    </location>
</feature>
<feature type="sequence variant" id="VAR_074068" description="In dbSNP:rs528548235." evidence="11">
    <original>I</original>
    <variation>V</variation>
    <location>
        <position position="89"/>
    </location>
</feature>
<feature type="sequence variant" id="VAR_071078" description="In ALS21; dbSNP:rs587777300." evidence="10">
    <original>F</original>
    <variation>C</variation>
    <location>
        <position position="115"/>
    </location>
</feature>
<feature type="sequence variant" id="VAR_078513" description="In ALS21; uncertain significance." evidence="12">
    <original>R</original>
    <variation>W</variation>
    <location>
        <position position="147"/>
    </location>
</feature>
<feature type="sequence variant" id="VAR_071079" description="In ALS21; uncertain significance; dbSNP:rs587777302." evidence="10">
    <original>P</original>
    <variation>S</variation>
    <location>
        <position position="154"/>
    </location>
</feature>
<feature type="sequence variant" id="VAR_071080" description="In ALS21; dbSNP:rs587777301." evidence="10">
    <original>T</original>
    <variation>A</variation>
    <location>
        <position position="622"/>
    </location>
</feature>
<feature type="sequence variant" id="VAR_074069" description="In dbSNP:rs139589527." evidence="11">
    <original>E</original>
    <variation>A</variation>
    <location>
        <position position="664"/>
    </location>
</feature>
<feature type="sequence variant" id="VAR_074070" description="In dbSNP:rs148402819." evidence="11">
    <original>N</original>
    <variation>S</variation>
    <location>
        <position position="787"/>
    </location>
</feature>
<feature type="sequence conflict" description="In Ref. 2; AAF17217." evidence="21" ref="2">
    <original>P</original>
    <variation>S</variation>
    <location>
        <position position="257"/>
    </location>
</feature>
<feature type="sequence conflict" description="In Ref. 2; AAF17217." evidence="21" ref="2">
    <original>P</original>
    <variation>S</variation>
    <location>
        <position position="274"/>
    </location>
</feature>
<feature type="sequence conflict" description="In Ref. 2; AAF17217 and 8; M63483." evidence="21" ref="2 8">
    <original>Y</original>
    <variation>C</variation>
    <location>
        <position position="572"/>
    </location>
</feature>
<feature type="sequence conflict" description="In Ref. 8; M63483." evidence="21" ref="8">
    <original>G</original>
    <variation>P</variation>
    <location>
        <position position="691"/>
    </location>
</feature>
<feature type="sequence conflict" description="In Ref. 8; M63483." evidence="21" ref="8">
    <original>D</original>
    <variation>H</variation>
    <location>
        <position position="703"/>
    </location>
</feature>
<dbReference type="EMBL" id="AB018266">
    <property type="protein sequence ID" value="BAA34443.2"/>
    <property type="status" value="ALT_INIT"/>
    <property type="molecule type" value="mRNA"/>
</dbReference>
<dbReference type="EMBL" id="AF117236">
    <property type="protein sequence ID" value="AAF17217.1"/>
    <property type="status" value="ALT_FRAME"/>
    <property type="molecule type" value="mRNA"/>
</dbReference>
<dbReference type="EMBL" id="AK316420">
    <property type="protein sequence ID" value="BAH14791.1"/>
    <property type="molecule type" value="mRNA"/>
</dbReference>
<dbReference type="EMBL" id="AC011404">
    <property type="status" value="NOT_ANNOTATED_CDS"/>
    <property type="molecule type" value="Genomic_DNA"/>
</dbReference>
<dbReference type="EMBL" id="CH471062">
    <property type="protein sequence ID" value="EAW62114.1"/>
    <property type="molecule type" value="Genomic_DNA"/>
</dbReference>
<dbReference type="EMBL" id="CH471062">
    <property type="protein sequence ID" value="EAW62115.1"/>
    <property type="molecule type" value="Genomic_DNA"/>
</dbReference>
<dbReference type="EMBL" id="CH471062">
    <property type="protein sequence ID" value="EAW62116.1"/>
    <property type="molecule type" value="Genomic_DNA"/>
</dbReference>
<dbReference type="EMBL" id="CH471062">
    <property type="protein sequence ID" value="EAW62117.1"/>
    <property type="molecule type" value="Genomic_DNA"/>
</dbReference>
<dbReference type="EMBL" id="BC015031">
    <property type="protein sequence ID" value="AAH15031.1"/>
    <property type="molecule type" value="mRNA"/>
</dbReference>
<dbReference type="EMBL" id="M63483">
    <property type="status" value="NOT_ANNOTATED_CDS"/>
    <property type="molecule type" value="mRNA"/>
</dbReference>
<dbReference type="CCDS" id="CCDS54908.1">
    <molecule id="P43243-2"/>
</dbReference>
<dbReference type="RefSeq" id="NP_001181883.1">
    <molecule id="P43243-1"/>
    <property type="nucleotide sequence ID" value="NM_001194954.2"/>
</dbReference>
<dbReference type="RefSeq" id="NP_001181884.1">
    <molecule id="P43243-1"/>
    <property type="nucleotide sequence ID" value="NM_001194955.2"/>
</dbReference>
<dbReference type="RefSeq" id="NP_001181885.1">
    <molecule id="P43243-2"/>
    <property type="nucleotide sequence ID" value="NM_001194956.2"/>
</dbReference>
<dbReference type="RefSeq" id="NP_001269207.1">
    <property type="nucleotide sequence ID" value="NM_001282278.1"/>
</dbReference>
<dbReference type="RefSeq" id="NP_001387376.1">
    <molecule id="P43243-1"/>
    <property type="nucleotide sequence ID" value="NM_001400447.1"/>
</dbReference>
<dbReference type="RefSeq" id="NP_001387377.1">
    <molecule id="P43243-1"/>
    <property type="nucleotide sequence ID" value="NM_001400448.1"/>
</dbReference>
<dbReference type="RefSeq" id="NP_001387379.1">
    <molecule id="P43243-1"/>
    <property type="nucleotide sequence ID" value="NM_001400450.1"/>
</dbReference>
<dbReference type="RefSeq" id="NP_001387380.1">
    <molecule id="P43243-1"/>
    <property type="nucleotide sequence ID" value="NM_001400451.1"/>
</dbReference>
<dbReference type="RefSeq" id="NP_001387381.1">
    <molecule id="P43243-1"/>
    <property type="nucleotide sequence ID" value="NM_001400452.1"/>
</dbReference>
<dbReference type="RefSeq" id="NP_001387382.1">
    <molecule id="P43243-1"/>
    <property type="nucleotide sequence ID" value="NM_001400453.1"/>
</dbReference>
<dbReference type="RefSeq" id="NP_001387383.1">
    <molecule id="P43243-1"/>
    <property type="nucleotide sequence ID" value="NM_001400454.1"/>
</dbReference>
<dbReference type="RefSeq" id="NP_001387384.1">
    <molecule id="P43243-1"/>
    <property type="nucleotide sequence ID" value="NM_001400455.1"/>
</dbReference>
<dbReference type="RefSeq" id="NP_001387385.1">
    <molecule id="P43243-1"/>
    <property type="nucleotide sequence ID" value="NM_001400456.1"/>
</dbReference>
<dbReference type="RefSeq" id="NP_001387386.1">
    <molecule id="P43243-1"/>
    <property type="nucleotide sequence ID" value="NM_001400457.1"/>
</dbReference>
<dbReference type="RefSeq" id="NP_001387387.1">
    <molecule id="P43243-1"/>
    <property type="nucleotide sequence ID" value="NM_001400458.1"/>
</dbReference>
<dbReference type="RefSeq" id="NP_061322.2">
    <molecule id="P43243-1"/>
    <property type="nucleotide sequence ID" value="NM_018834.5"/>
</dbReference>
<dbReference type="RefSeq" id="NP_954659.1">
    <molecule id="P43243-1"/>
    <property type="nucleotide sequence ID" value="NM_199189.3"/>
</dbReference>
<dbReference type="SMR" id="P43243"/>
<dbReference type="BioGRID" id="115126">
    <property type="interactions" value="663"/>
</dbReference>
<dbReference type="CORUM" id="P43243"/>
<dbReference type="FunCoup" id="P43243">
    <property type="interactions" value="2335"/>
</dbReference>
<dbReference type="IntAct" id="P43243">
    <property type="interactions" value="253"/>
</dbReference>
<dbReference type="MINT" id="P43243"/>
<dbReference type="STRING" id="9606.ENSP00000354346"/>
<dbReference type="GlyCosmos" id="P43243">
    <property type="glycosylation" value="8 sites, 2 glycans"/>
</dbReference>
<dbReference type="GlyGen" id="P43243">
    <property type="glycosylation" value="11 sites, 2 O-linked glycans (11 sites)"/>
</dbReference>
<dbReference type="iPTMnet" id="P43243"/>
<dbReference type="MetOSite" id="P43243"/>
<dbReference type="PhosphoSitePlus" id="P43243"/>
<dbReference type="SwissPalm" id="P43243"/>
<dbReference type="BioMuta" id="MATR3"/>
<dbReference type="DMDM" id="12643409"/>
<dbReference type="jPOST" id="P43243"/>
<dbReference type="MassIVE" id="P43243"/>
<dbReference type="PaxDb" id="9606-ENSP00000354346"/>
<dbReference type="PeptideAtlas" id="P43243"/>
<dbReference type="ProteomicsDB" id="55599">
    <molecule id="P43243-1"/>
</dbReference>
<dbReference type="ProteomicsDB" id="55600">
    <molecule id="P43243-2"/>
</dbReference>
<dbReference type="Pumba" id="P43243"/>
<dbReference type="TopDownProteomics" id="P43243-1">
    <molecule id="P43243-1"/>
</dbReference>
<dbReference type="ABCD" id="P43243">
    <property type="antibodies" value="1 sequenced antibody"/>
</dbReference>
<dbReference type="Antibodypedia" id="15070">
    <property type="antibodies" value="244 antibodies from 31 providers"/>
</dbReference>
<dbReference type="DNASU" id="9782"/>
<dbReference type="Ensembl" id="ENST00000394805.8">
    <molecule id="P43243-1"/>
    <property type="protein sequence ID" value="ENSP00000378284.3"/>
    <property type="gene ID" value="ENSG00000015479.20"/>
</dbReference>
<dbReference type="Ensembl" id="ENST00000503811.5">
    <molecule id="P43243-2"/>
    <property type="protein sequence ID" value="ENSP00000423587.1"/>
    <property type="gene ID" value="ENSG00000015479.20"/>
</dbReference>
<dbReference type="Ensembl" id="ENST00000618441.5">
    <molecule id="P43243-1"/>
    <property type="protein sequence ID" value="ENSP00000482895.1"/>
    <property type="gene ID" value="ENSG00000015479.20"/>
</dbReference>
<dbReference type="GeneID" id="9782"/>
<dbReference type="KEGG" id="hsa:9782"/>
<dbReference type="MANE-Select" id="ENST00000394805.8">
    <property type="protein sequence ID" value="ENSP00000378284.3"/>
    <property type="RefSeq nucleotide sequence ID" value="NM_018834.6"/>
    <property type="RefSeq protein sequence ID" value="NP_061322.2"/>
</dbReference>
<dbReference type="UCSC" id="uc003ldx.4">
    <molecule id="P43243-1"/>
    <property type="organism name" value="human"/>
</dbReference>
<dbReference type="AGR" id="HGNC:6912"/>
<dbReference type="CTD" id="9782"/>
<dbReference type="DisGeNET" id="9782"/>
<dbReference type="GeneCards" id="MATR3"/>
<dbReference type="HGNC" id="HGNC:6912">
    <property type="gene designation" value="MATR3"/>
</dbReference>
<dbReference type="HPA" id="ENSG00000015479">
    <property type="expression patterns" value="Low tissue specificity"/>
</dbReference>
<dbReference type="MalaCards" id="MATR3"/>
<dbReference type="MIM" id="164015">
    <property type="type" value="gene"/>
</dbReference>
<dbReference type="MIM" id="606070">
    <property type="type" value="phenotype"/>
</dbReference>
<dbReference type="neXtProt" id="NX_P43243"/>
<dbReference type="OpenTargets" id="ENSG00000015479"/>
<dbReference type="OpenTargets" id="ENSG00000280987"/>
<dbReference type="Orphanet" id="803">
    <property type="disease" value="Amyotrophic lateral sclerosis"/>
</dbReference>
<dbReference type="Orphanet" id="600">
    <property type="disease" value="Vocal cord and pharyngeal distal myopathy"/>
</dbReference>
<dbReference type="PharmGKB" id="PA30655"/>
<dbReference type="VEuPathDB" id="HostDB:ENSG00000015479"/>
<dbReference type="eggNOG" id="ENOG502QRVG">
    <property type="taxonomic scope" value="Eukaryota"/>
</dbReference>
<dbReference type="GeneTree" id="ENSGT00940000153322"/>
<dbReference type="HOGENOM" id="CLU_015917_0_0_1"/>
<dbReference type="InParanoid" id="P43243"/>
<dbReference type="OMA" id="SMFPHVC"/>
<dbReference type="OrthoDB" id="9938441at2759"/>
<dbReference type="PAN-GO" id="P43243">
    <property type="GO annotations" value="2 GO annotations based on evolutionary models"/>
</dbReference>
<dbReference type="PhylomeDB" id="P43243"/>
<dbReference type="TreeFam" id="TF333921"/>
<dbReference type="PathwayCommons" id="P43243"/>
<dbReference type="SignaLink" id="P43243"/>
<dbReference type="SIGNOR" id="P43243"/>
<dbReference type="BioGRID-ORCS" id="9782">
    <property type="hits" value="146 hits in 1161 CRISPR screens"/>
</dbReference>
<dbReference type="CD-CODE" id="232F8A39">
    <property type="entry name" value="P-body"/>
</dbReference>
<dbReference type="CD-CODE" id="462A97B5">
    <property type="entry name" value="Leucocyte nuclear body"/>
</dbReference>
<dbReference type="CD-CODE" id="DEE660B4">
    <property type="entry name" value="Stress granule"/>
</dbReference>
<dbReference type="CD-CODE" id="F15C9420">
    <property type="entry name" value="Synthetic Condensate 000300"/>
</dbReference>
<dbReference type="ChiTaRS" id="MATR3">
    <property type="organism name" value="human"/>
</dbReference>
<dbReference type="GeneWiki" id="MATR3"/>
<dbReference type="GenomeRNAi" id="9782"/>
<dbReference type="Pharos" id="P43243">
    <property type="development level" value="Tbio"/>
</dbReference>
<dbReference type="PRO" id="PR:P43243"/>
<dbReference type="Proteomes" id="UP000005640">
    <property type="component" value="Chromosome 5"/>
</dbReference>
<dbReference type="RNAct" id="P43243">
    <property type="molecule type" value="protein"/>
</dbReference>
<dbReference type="Bgee" id="ENSG00000015479">
    <property type="expression patterns" value="Expressed in cortical plate and 105 other cell types or tissues"/>
</dbReference>
<dbReference type="ExpressionAtlas" id="P43243">
    <property type="expression patterns" value="baseline and differential"/>
</dbReference>
<dbReference type="GO" id="GO:0016020">
    <property type="term" value="C:membrane"/>
    <property type="evidence" value="ECO:0007005"/>
    <property type="project" value="UniProtKB"/>
</dbReference>
<dbReference type="GO" id="GO:0005637">
    <property type="term" value="C:nuclear inner membrane"/>
    <property type="evidence" value="ECO:0000304"/>
    <property type="project" value="ProtInc"/>
</dbReference>
<dbReference type="GO" id="GO:0016363">
    <property type="term" value="C:nuclear matrix"/>
    <property type="evidence" value="ECO:0007669"/>
    <property type="project" value="UniProtKB-SubCell"/>
</dbReference>
<dbReference type="GO" id="GO:0005634">
    <property type="term" value="C:nucleus"/>
    <property type="evidence" value="ECO:0000318"/>
    <property type="project" value="GO_Central"/>
</dbReference>
<dbReference type="GO" id="GO:0042802">
    <property type="term" value="F:identical protein binding"/>
    <property type="evidence" value="ECO:0000353"/>
    <property type="project" value="IntAct"/>
</dbReference>
<dbReference type="GO" id="GO:0035198">
    <property type="term" value="F:miRNA binding"/>
    <property type="evidence" value="ECO:0000314"/>
    <property type="project" value="UniProtKB"/>
</dbReference>
<dbReference type="GO" id="GO:0003723">
    <property type="term" value="F:RNA binding"/>
    <property type="evidence" value="ECO:0007005"/>
    <property type="project" value="UniProtKB"/>
</dbReference>
<dbReference type="GO" id="GO:0005198">
    <property type="term" value="F:structural molecule activity"/>
    <property type="evidence" value="ECO:0000304"/>
    <property type="project" value="ProtInc"/>
</dbReference>
<dbReference type="GO" id="GO:0008270">
    <property type="term" value="F:zinc ion binding"/>
    <property type="evidence" value="ECO:0007669"/>
    <property type="project" value="UniProtKB-KW"/>
</dbReference>
<dbReference type="GO" id="GO:0002218">
    <property type="term" value="P:activation of innate immune response"/>
    <property type="evidence" value="ECO:0000314"/>
    <property type="project" value="UniProtKB"/>
</dbReference>
<dbReference type="GO" id="GO:0001825">
    <property type="term" value="P:blastocyst formation"/>
    <property type="evidence" value="ECO:0007669"/>
    <property type="project" value="Ensembl"/>
</dbReference>
<dbReference type="GO" id="GO:0003170">
    <property type="term" value="P:heart valve development"/>
    <property type="evidence" value="ECO:0000250"/>
    <property type="project" value="BHF-UCL"/>
</dbReference>
<dbReference type="GO" id="GO:0045087">
    <property type="term" value="P:innate immune response"/>
    <property type="evidence" value="ECO:0007669"/>
    <property type="project" value="UniProtKB-KW"/>
</dbReference>
<dbReference type="GO" id="GO:0010608">
    <property type="term" value="P:post-transcriptional regulation of gene expression"/>
    <property type="evidence" value="ECO:0000314"/>
    <property type="project" value="CACAO"/>
</dbReference>
<dbReference type="GO" id="GO:0003281">
    <property type="term" value="P:ventricular septum development"/>
    <property type="evidence" value="ECO:0000250"/>
    <property type="project" value="BHF-UCL"/>
</dbReference>
<dbReference type="CDD" id="cd12714">
    <property type="entry name" value="RRM1_MATR3"/>
    <property type="match status" value="1"/>
</dbReference>
<dbReference type="CDD" id="cd12715">
    <property type="entry name" value="RRM2_MATR3"/>
    <property type="match status" value="1"/>
</dbReference>
<dbReference type="FunFam" id="3.30.70.330:FF:000151">
    <property type="entry name" value="matrin-3 isoform X1"/>
    <property type="match status" value="1"/>
</dbReference>
<dbReference type="FunFam" id="3.30.70.330:FF:000149">
    <property type="entry name" value="matrin-3 isoform X2"/>
    <property type="match status" value="1"/>
</dbReference>
<dbReference type="Gene3D" id="3.30.70.330">
    <property type="match status" value="2"/>
</dbReference>
<dbReference type="InterPro" id="IPR034928">
    <property type="entry name" value="MATR3_RRM1"/>
</dbReference>
<dbReference type="InterPro" id="IPR034930">
    <property type="entry name" value="MATR3_RRM2"/>
</dbReference>
<dbReference type="InterPro" id="IPR000690">
    <property type="entry name" value="Matrin/U1-C_Znf_C2H2"/>
</dbReference>
<dbReference type="InterPro" id="IPR003604">
    <property type="entry name" value="Matrin/U1-like-C_Znf_C2H2"/>
</dbReference>
<dbReference type="InterPro" id="IPR012677">
    <property type="entry name" value="Nucleotide-bd_a/b_plait_sf"/>
</dbReference>
<dbReference type="InterPro" id="IPR035979">
    <property type="entry name" value="RBD_domain_sf"/>
</dbReference>
<dbReference type="InterPro" id="IPR000504">
    <property type="entry name" value="RRM_dom"/>
</dbReference>
<dbReference type="PANTHER" id="PTHR15592">
    <property type="entry name" value="MATRIN 3/NUCLEAR PROTEIN 220-RELATED"/>
    <property type="match status" value="1"/>
</dbReference>
<dbReference type="SMART" id="SM00360">
    <property type="entry name" value="RRM"/>
    <property type="match status" value="2"/>
</dbReference>
<dbReference type="SMART" id="SM00451">
    <property type="entry name" value="ZnF_U1"/>
    <property type="match status" value="2"/>
</dbReference>
<dbReference type="SUPFAM" id="SSF54928">
    <property type="entry name" value="RNA-binding domain, RBD"/>
    <property type="match status" value="2"/>
</dbReference>
<dbReference type="PROSITE" id="PS50102">
    <property type="entry name" value="RRM"/>
    <property type="match status" value="2"/>
</dbReference>
<dbReference type="PROSITE" id="PS50171">
    <property type="entry name" value="ZF_MATRIN"/>
    <property type="match status" value="1"/>
</dbReference>
<protein>
    <recommendedName>
        <fullName>Matrin-3</fullName>
    </recommendedName>
</protein>
<accession>P43243</accession>
<accession>B7ZAV5</accession>
<accession>D3DQC3</accession>
<accession>Q9UHW0</accession>
<accession>Q9UQ27</accession>
<proteinExistence type="evidence at protein level"/>
<name>MATR3_HUMAN</name>
<keyword id="KW-0007">Acetylation</keyword>
<keyword id="KW-0025">Alternative splicing</keyword>
<keyword id="KW-0036">Amyotrophic lateral sclerosis</keyword>
<keyword id="KW-0903">Direct protein sequencing</keyword>
<keyword id="KW-0225">Disease variant</keyword>
<keyword id="KW-0391">Immunity</keyword>
<keyword id="KW-0399">Innate immunity</keyword>
<keyword id="KW-1017">Isopeptide bond</keyword>
<keyword id="KW-0479">Metal-binding</keyword>
<keyword id="KW-0523">Neurodegeneration</keyword>
<keyword id="KW-0539">Nucleus</keyword>
<keyword id="KW-0597">Phosphoprotein</keyword>
<keyword id="KW-1267">Proteomics identification</keyword>
<keyword id="KW-1185">Reference proteome</keyword>
<keyword id="KW-0677">Repeat</keyword>
<keyword id="KW-0694">RNA-binding</keyword>
<keyword id="KW-0832">Ubl conjugation</keyword>
<keyword id="KW-0862">Zinc</keyword>
<keyword id="KW-0863">Zinc-finger</keyword>
<sequence>MSKSFQQSSLSRDSQGHGRDLSAAGIGLLAAATQSLSMPASLGRMNQGTARLASLMNLGMSSSLNQQGAHSALSSASTSSHNLQSIFNIGSRGPLPLSSQHRGDADQASNILASFGLSARDLDELSRYPEDKITPENLPQILLQLKRRRTEEGPTLSYGRDGRSATREPPYRVPRDDWEEKRHFRRDSFDDRGPSLNPVLDYDHGSRSQESGYYDRMDYEDDRLRDGERCRDDSFFGETSHNYHKFDSEYERMGRGPGPLQERSLFEKKRGAPPSSNIEDFHGLLPKGYPHLCSICDLPVHSNKEWSQHINGASHSRRCQLLLEIYPEWNPDNDTGHTMGDPFMLQQSTNPAPGILGPPPPSFHLGGPAVGPRGNLGAGNGNLQGPRHMQKGRVETSRVVHIMDFQRGKNLRYQLLQLVEPFGVISNHLILNKINEAFIEMATTEDAQAAVDYYTTTPALVFGKPVRVHLSQKYKRIKKPEGKPDQKFDQKQELGRVIHLSNLPHSGYSDSAVLKLAEPYGKIKNYILMRMKSQAFIEMETREDAMAMVDHCLKKALWFQGRCVKVDLSEKYKKLVLRIPNRGIDLLKKDKSRKRSYSPDGKESPSDKKSKTDGSQKTESSTEGKEQEEKSGEDGEKDTKDDQTEQEPNMLLESEDELLVDEEEAAALLESGSSVGDETDLANLGDVASDGKKEPSDKAVKKDGSASAAAKKKLKKVDKIEELDQENEAALENGIKNEENTEPGAESSENADDPNKDTSENADGQSDENKDDYTIPDEYRIGPYQPNVPVGIDYVIPKTGFYCKLCSLFYTNEEVAKNTHCSSLPHYQKLKKFLNKLAEERRQKKET</sequence>
<gene>
    <name type="primary">MATR3</name>
    <name type="synonym">KIAA0723</name>
</gene>
<reference key="1">
    <citation type="journal article" date="1998" name="DNA Res.">
        <title>Prediction of the coding sequences of unidentified human genes. XI. The complete sequences of 100 new cDNA clones from brain which code for large proteins in vitro.</title>
        <authorList>
            <person name="Nagase T."/>
            <person name="Ishikawa K."/>
            <person name="Suyama M."/>
            <person name="Kikuno R."/>
            <person name="Miyajima N."/>
            <person name="Tanaka A."/>
            <person name="Kotani H."/>
            <person name="Nomura N."/>
            <person name="Ohara O."/>
        </authorList>
    </citation>
    <scope>NUCLEOTIDE SEQUENCE [LARGE SCALE MRNA] (ISOFORM 1)</scope>
    <source>
        <tissue>Brain</tissue>
    </source>
</reference>
<reference key="2">
    <citation type="journal article" date="2000" name="Proc. Natl. Acad. Sci. U.S.A.">
        <title>Gene expression profiling in the human hypothalamus-pituitary-adrenal axis and full-length cDNA cloning.</title>
        <authorList>
            <person name="Hu R.-M."/>
            <person name="Han Z.-G."/>
            <person name="Song H.-D."/>
            <person name="Peng Y.-D."/>
            <person name="Huang Q.-H."/>
            <person name="Ren S.-X."/>
            <person name="Gu Y.-J."/>
            <person name="Huang C.-H."/>
            <person name="Li Y.-B."/>
            <person name="Jiang C.-L."/>
            <person name="Fu G."/>
            <person name="Zhang Q.-H."/>
            <person name="Gu B.-W."/>
            <person name="Dai M."/>
            <person name="Mao Y.-F."/>
            <person name="Gao G.-F."/>
            <person name="Rong R."/>
            <person name="Ye M."/>
            <person name="Zhou J."/>
            <person name="Xu S.-H."/>
            <person name="Gu J."/>
            <person name="Shi J.-X."/>
            <person name="Jin W.-R."/>
            <person name="Zhang C.-K."/>
            <person name="Wu T.-M."/>
            <person name="Huang G.-Y."/>
            <person name="Chen Z."/>
            <person name="Chen M.-D."/>
            <person name="Chen J.-L."/>
        </authorList>
    </citation>
    <scope>NUCLEOTIDE SEQUENCE [LARGE SCALE MRNA] (ISOFORM 1)</scope>
    <source>
        <tissue>Hypothalamus</tissue>
    </source>
</reference>
<reference key="3">
    <citation type="journal article" date="2004" name="Nat. Genet.">
        <title>Complete sequencing and characterization of 21,243 full-length human cDNAs.</title>
        <authorList>
            <person name="Ota T."/>
            <person name="Suzuki Y."/>
            <person name="Nishikawa T."/>
            <person name="Otsuki T."/>
            <person name="Sugiyama T."/>
            <person name="Irie R."/>
            <person name="Wakamatsu A."/>
            <person name="Hayashi K."/>
            <person name="Sato H."/>
            <person name="Nagai K."/>
            <person name="Kimura K."/>
            <person name="Makita H."/>
            <person name="Sekine M."/>
            <person name="Obayashi M."/>
            <person name="Nishi T."/>
            <person name="Shibahara T."/>
            <person name="Tanaka T."/>
            <person name="Ishii S."/>
            <person name="Yamamoto J."/>
            <person name="Saito K."/>
            <person name="Kawai Y."/>
            <person name="Isono Y."/>
            <person name="Nakamura Y."/>
            <person name="Nagahari K."/>
            <person name="Murakami K."/>
            <person name="Yasuda T."/>
            <person name="Iwayanagi T."/>
            <person name="Wagatsuma M."/>
            <person name="Shiratori A."/>
            <person name="Sudo H."/>
            <person name="Hosoiri T."/>
            <person name="Kaku Y."/>
            <person name="Kodaira H."/>
            <person name="Kondo H."/>
            <person name="Sugawara M."/>
            <person name="Takahashi M."/>
            <person name="Kanda K."/>
            <person name="Yokoi T."/>
            <person name="Furuya T."/>
            <person name="Kikkawa E."/>
            <person name="Omura Y."/>
            <person name="Abe K."/>
            <person name="Kamihara K."/>
            <person name="Katsuta N."/>
            <person name="Sato K."/>
            <person name="Tanikawa M."/>
            <person name="Yamazaki M."/>
            <person name="Ninomiya K."/>
            <person name="Ishibashi T."/>
            <person name="Yamashita H."/>
            <person name="Murakawa K."/>
            <person name="Fujimori K."/>
            <person name="Tanai H."/>
            <person name="Kimata M."/>
            <person name="Watanabe M."/>
            <person name="Hiraoka S."/>
            <person name="Chiba Y."/>
            <person name="Ishida S."/>
            <person name="Ono Y."/>
            <person name="Takiguchi S."/>
            <person name="Watanabe S."/>
            <person name="Yosida M."/>
            <person name="Hotuta T."/>
            <person name="Kusano J."/>
            <person name="Kanehori K."/>
            <person name="Takahashi-Fujii A."/>
            <person name="Hara H."/>
            <person name="Tanase T.-O."/>
            <person name="Nomura Y."/>
            <person name="Togiya S."/>
            <person name="Komai F."/>
            <person name="Hara R."/>
            <person name="Takeuchi K."/>
            <person name="Arita M."/>
            <person name="Imose N."/>
            <person name="Musashino K."/>
            <person name="Yuuki H."/>
            <person name="Oshima A."/>
            <person name="Sasaki N."/>
            <person name="Aotsuka S."/>
            <person name="Yoshikawa Y."/>
            <person name="Matsunawa H."/>
            <person name="Ichihara T."/>
            <person name="Shiohata N."/>
            <person name="Sano S."/>
            <person name="Moriya S."/>
            <person name="Momiyama H."/>
            <person name="Satoh N."/>
            <person name="Takami S."/>
            <person name="Terashima Y."/>
            <person name="Suzuki O."/>
            <person name="Nakagawa S."/>
            <person name="Senoh A."/>
            <person name="Mizoguchi H."/>
            <person name="Goto Y."/>
            <person name="Shimizu F."/>
            <person name="Wakebe H."/>
            <person name="Hishigaki H."/>
            <person name="Watanabe T."/>
            <person name="Sugiyama A."/>
            <person name="Takemoto M."/>
            <person name="Kawakami B."/>
            <person name="Yamazaki M."/>
            <person name="Watanabe K."/>
            <person name="Kumagai A."/>
            <person name="Itakura S."/>
            <person name="Fukuzumi Y."/>
            <person name="Fujimori Y."/>
            <person name="Komiyama M."/>
            <person name="Tashiro H."/>
            <person name="Tanigami A."/>
            <person name="Fujiwara T."/>
            <person name="Ono T."/>
            <person name="Yamada K."/>
            <person name="Fujii Y."/>
            <person name="Ozaki K."/>
            <person name="Hirao M."/>
            <person name="Ohmori Y."/>
            <person name="Kawabata A."/>
            <person name="Hikiji T."/>
            <person name="Kobatake N."/>
            <person name="Inagaki H."/>
            <person name="Ikema Y."/>
            <person name="Okamoto S."/>
            <person name="Okitani R."/>
            <person name="Kawakami T."/>
            <person name="Noguchi S."/>
            <person name="Itoh T."/>
            <person name="Shigeta K."/>
            <person name="Senba T."/>
            <person name="Matsumura K."/>
            <person name="Nakajima Y."/>
            <person name="Mizuno T."/>
            <person name="Morinaga M."/>
            <person name="Sasaki M."/>
            <person name="Togashi T."/>
            <person name="Oyama M."/>
            <person name="Hata H."/>
            <person name="Watanabe M."/>
            <person name="Komatsu T."/>
            <person name="Mizushima-Sugano J."/>
            <person name="Satoh T."/>
            <person name="Shirai Y."/>
            <person name="Takahashi Y."/>
            <person name="Nakagawa K."/>
            <person name="Okumura K."/>
            <person name="Nagase T."/>
            <person name="Nomura N."/>
            <person name="Kikuchi H."/>
            <person name="Masuho Y."/>
            <person name="Yamashita R."/>
            <person name="Nakai K."/>
            <person name="Yada T."/>
            <person name="Nakamura Y."/>
            <person name="Ohara O."/>
            <person name="Isogai T."/>
            <person name="Sugano S."/>
        </authorList>
    </citation>
    <scope>NUCLEOTIDE SEQUENCE [LARGE SCALE MRNA] (ISOFORM 2)</scope>
    <source>
        <tissue>Testis</tissue>
    </source>
</reference>
<reference key="4">
    <citation type="journal article" date="2004" name="Nature">
        <title>The DNA sequence and comparative analysis of human chromosome 5.</title>
        <authorList>
            <person name="Schmutz J."/>
            <person name="Martin J."/>
            <person name="Terry A."/>
            <person name="Couronne O."/>
            <person name="Grimwood J."/>
            <person name="Lowry S."/>
            <person name="Gordon L.A."/>
            <person name="Scott D."/>
            <person name="Xie G."/>
            <person name="Huang W."/>
            <person name="Hellsten U."/>
            <person name="Tran-Gyamfi M."/>
            <person name="She X."/>
            <person name="Prabhakar S."/>
            <person name="Aerts A."/>
            <person name="Altherr M."/>
            <person name="Bajorek E."/>
            <person name="Black S."/>
            <person name="Branscomb E."/>
            <person name="Caoile C."/>
            <person name="Challacombe J.F."/>
            <person name="Chan Y.M."/>
            <person name="Denys M."/>
            <person name="Detter J.C."/>
            <person name="Escobar J."/>
            <person name="Flowers D."/>
            <person name="Fotopulos D."/>
            <person name="Glavina T."/>
            <person name="Gomez M."/>
            <person name="Gonzales E."/>
            <person name="Goodstein D."/>
            <person name="Grigoriev I."/>
            <person name="Groza M."/>
            <person name="Hammon N."/>
            <person name="Hawkins T."/>
            <person name="Haydu L."/>
            <person name="Israni S."/>
            <person name="Jett J."/>
            <person name="Kadner K."/>
            <person name="Kimball H."/>
            <person name="Kobayashi A."/>
            <person name="Lopez F."/>
            <person name="Lou Y."/>
            <person name="Martinez D."/>
            <person name="Medina C."/>
            <person name="Morgan J."/>
            <person name="Nandkeshwar R."/>
            <person name="Noonan J.P."/>
            <person name="Pitluck S."/>
            <person name="Pollard M."/>
            <person name="Predki P."/>
            <person name="Priest J."/>
            <person name="Ramirez L."/>
            <person name="Retterer J."/>
            <person name="Rodriguez A."/>
            <person name="Rogers S."/>
            <person name="Salamov A."/>
            <person name="Salazar A."/>
            <person name="Thayer N."/>
            <person name="Tice H."/>
            <person name="Tsai M."/>
            <person name="Ustaszewska A."/>
            <person name="Vo N."/>
            <person name="Wheeler J."/>
            <person name="Wu K."/>
            <person name="Yang J."/>
            <person name="Dickson M."/>
            <person name="Cheng J.-F."/>
            <person name="Eichler E.E."/>
            <person name="Olsen A."/>
            <person name="Pennacchio L.A."/>
            <person name="Rokhsar D.S."/>
            <person name="Richardson P."/>
            <person name="Lucas S.M."/>
            <person name="Myers R.M."/>
            <person name="Rubin E.M."/>
        </authorList>
    </citation>
    <scope>NUCLEOTIDE SEQUENCE [LARGE SCALE GENOMIC DNA]</scope>
</reference>
<reference key="5">
    <citation type="submission" date="2005-09" db="EMBL/GenBank/DDBJ databases">
        <authorList>
            <person name="Mural R.J."/>
            <person name="Istrail S."/>
            <person name="Sutton G.G."/>
            <person name="Florea L."/>
            <person name="Halpern A.L."/>
            <person name="Mobarry C.M."/>
            <person name="Lippert R."/>
            <person name="Walenz B."/>
            <person name="Shatkay H."/>
            <person name="Dew I."/>
            <person name="Miller J.R."/>
            <person name="Flanigan M.J."/>
            <person name="Edwards N.J."/>
            <person name="Bolanos R."/>
            <person name="Fasulo D."/>
            <person name="Halldorsson B.V."/>
            <person name="Hannenhalli S."/>
            <person name="Turner R."/>
            <person name="Yooseph S."/>
            <person name="Lu F."/>
            <person name="Nusskern D.R."/>
            <person name="Shue B.C."/>
            <person name="Zheng X.H."/>
            <person name="Zhong F."/>
            <person name="Delcher A.L."/>
            <person name="Huson D.H."/>
            <person name="Kravitz S.A."/>
            <person name="Mouchard L."/>
            <person name="Reinert K."/>
            <person name="Remington K.A."/>
            <person name="Clark A.G."/>
            <person name="Waterman M.S."/>
            <person name="Eichler E.E."/>
            <person name="Adams M.D."/>
            <person name="Hunkapiller M.W."/>
            <person name="Myers E.W."/>
            <person name="Venter J.C."/>
        </authorList>
    </citation>
    <scope>NUCLEOTIDE SEQUENCE [LARGE SCALE GENOMIC DNA]</scope>
</reference>
<reference key="6">
    <citation type="journal article" date="2004" name="Genome Res.">
        <title>The status, quality, and expansion of the NIH full-length cDNA project: the Mammalian Gene Collection (MGC).</title>
        <authorList>
            <consortium name="The MGC Project Team"/>
        </authorList>
    </citation>
    <scope>NUCLEOTIDE SEQUENCE [LARGE SCALE MRNA] (ISOFORM 1)</scope>
    <source>
        <tissue>Skin</tissue>
    </source>
</reference>
<reference key="7">
    <citation type="submission" date="2009-07" db="UniProtKB">
        <authorList>
            <person name="Bienvenut W.V."/>
            <person name="Matallanas D."/>
            <person name="Kolch W."/>
        </authorList>
    </citation>
    <scope>PROTEIN SEQUENCE OF 2-12; 150-160; 187-207 AND 374-387</scope>
    <scope>CLEAVAGE OF INITIATOR METHIONINE</scope>
    <scope>ACETYLATION AT SER-2</scope>
    <scope>IDENTIFICATION BY MASS SPECTROMETRY</scope>
    <source>
        <tissue>Mammary carcinoma</tissue>
    </source>
</reference>
<reference key="8">
    <citation type="journal article" date="1991" name="J. Biol. Chem.">
        <title>Molecular cloning of matrin 3. A 125-kilodalton protein of the nuclear matrix contains an extensive acidic domain.</title>
        <authorList>
            <person name="Belgrader P."/>
            <person name="Dey R."/>
            <person name="Berezney R."/>
        </authorList>
    </citation>
    <scope>NUCLEOTIDE SEQUENCE [MRNA] OF 432-847 (ISOFORM 1)</scope>
</reference>
<reference key="9">
    <citation type="journal article" date="2001" name="Cell">
        <title>The fate of dsRNA in the nucleus: a p54(nrb)-containing complex mediates the nuclear retention of promiscuously A-to-I edited RNAs.</title>
        <authorList>
            <person name="Zhang Z."/>
            <person name="Carmichael G.G."/>
        </authorList>
    </citation>
    <scope>FUNCTION IN NUCLEAR RETENTION OF A-TO-I EDITED RNAS</scope>
    <scope>IDENTIFICATION IN A COMPLEX WITH SFPQ AND NONO</scope>
</reference>
<reference key="10">
    <citation type="journal article" date="2006" name="Cell">
        <title>Global, in vivo, and site-specific phosphorylation dynamics in signaling networks.</title>
        <authorList>
            <person name="Olsen J.V."/>
            <person name="Blagoev B."/>
            <person name="Gnad F."/>
            <person name="Macek B."/>
            <person name="Kumar C."/>
            <person name="Mortensen P."/>
            <person name="Mann M."/>
        </authorList>
    </citation>
    <scope>PHOSPHORYLATION [LARGE SCALE ANALYSIS] AT SER-188</scope>
    <scope>IDENTIFICATION BY MASS SPECTROMETRY [LARGE SCALE ANALYSIS]</scope>
    <source>
        <tissue>Cervix carcinoma</tissue>
    </source>
</reference>
<reference key="11">
    <citation type="journal article" date="2007" name="EMBO Rep.">
        <title>Proteomic and functional analysis of Argonaute-containing mRNA-protein complexes in human cells.</title>
        <authorList>
            <person name="Hoeck J."/>
            <person name="Weinmann L."/>
            <person name="Ender C."/>
            <person name="Ruedel S."/>
            <person name="Kremmer E."/>
            <person name="Raabe M."/>
            <person name="Urlaub H."/>
            <person name="Meister G."/>
        </authorList>
    </citation>
    <scope>INTERACTION WITH AGO1 AND AGO2</scope>
</reference>
<reference key="12">
    <citation type="journal article" date="2007" name="J. Proteome Res.">
        <title>Improved titanium dioxide enrichment of phosphopeptides from HeLa cells and high confident phosphopeptide identification by cross-validation of MS/MS and MS/MS/MS spectra.</title>
        <authorList>
            <person name="Yu L.R."/>
            <person name="Zhu Z."/>
            <person name="Chan K.C."/>
            <person name="Issaq H.J."/>
            <person name="Dimitrov D.S."/>
            <person name="Veenstra T.D."/>
        </authorList>
    </citation>
    <scope>PHOSPHORYLATION [LARGE SCALE ANALYSIS] AT SER-188</scope>
    <scope>IDENTIFICATION BY MASS SPECTROMETRY [LARGE SCALE ANALYSIS]</scope>
    <source>
        <tissue>Cervix carcinoma</tissue>
    </source>
</reference>
<reference key="13">
    <citation type="journal article" date="2008" name="J. Proteome Res.">
        <title>Combining protein-based IMAC, peptide-based IMAC, and MudPIT for efficient phosphoproteomic analysis.</title>
        <authorList>
            <person name="Cantin G.T."/>
            <person name="Yi W."/>
            <person name="Lu B."/>
            <person name="Park S.K."/>
            <person name="Xu T."/>
            <person name="Lee J.-D."/>
            <person name="Yates J.R. III"/>
        </authorList>
    </citation>
    <scope>PHOSPHORYLATION [LARGE SCALE ANALYSIS] AT SER-188 AND SER-206</scope>
    <scope>IDENTIFICATION BY MASS SPECTROMETRY [LARGE SCALE ANALYSIS]</scope>
    <source>
        <tissue>Cervix carcinoma</tissue>
    </source>
</reference>
<reference key="14">
    <citation type="journal article" date="2008" name="J. Proteome Res.">
        <title>Phosphorylation analysis of primary human T lymphocytes using sequential IMAC and titanium oxide enrichment.</title>
        <authorList>
            <person name="Carrascal M."/>
            <person name="Ovelleiro D."/>
            <person name="Casas V."/>
            <person name="Gay M."/>
            <person name="Abian J."/>
        </authorList>
    </citation>
    <scope>IDENTIFICATION BY MASS SPECTROMETRY [LARGE SCALE ANALYSIS]</scope>
    <source>
        <tissue>T-cell</tissue>
    </source>
</reference>
<reference key="15">
    <citation type="journal article" date="2008" name="Mol. Cell">
        <title>Kinase-selective enrichment enables quantitative phosphoproteomics of the kinome across the cell cycle.</title>
        <authorList>
            <person name="Daub H."/>
            <person name="Olsen J.V."/>
            <person name="Bairlein M."/>
            <person name="Gnad F."/>
            <person name="Oppermann F.S."/>
            <person name="Korner R."/>
            <person name="Greff Z."/>
            <person name="Keri G."/>
            <person name="Stemmann O."/>
            <person name="Mann M."/>
        </authorList>
    </citation>
    <scope>IDENTIFICATION BY MASS SPECTROMETRY [LARGE SCALE ANALYSIS]</scope>
    <source>
        <tissue>Cervix carcinoma</tissue>
    </source>
</reference>
<reference key="16">
    <citation type="journal article" date="2008" name="Proc. Natl. Acad. Sci. U.S.A.">
        <title>A quantitative atlas of mitotic phosphorylation.</title>
        <authorList>
            <person name="Dephoure N."/>
            <person name="Zhou C."/>
            <person name="Villen J."/>
            <person name="Beausoleil S.A."/>
            <person name="Bakalarski C.E."/>
            <person name="Elledge S.J."/>
            <person name="Gygi S.P."/>
        </authorList>
    </citation>
    <scope>PHOSPHORYLATION [LARGE SCALE ANALYSIS] AT SER-188; SER-195; SER-208; SER-533; SER-596; SER-598 AND SER-604</scope>
    <scope>IDENTIFICATION BY MASS SPECTROMETRY [LARGE SCALE ANALYSIS]</scope>
    <source>
        <tissue>Cervix carcinoma</tissue>
    </source>
</reference>
<reference key="17">
    <citation type="journal article" date="2008" name="Proteomics">
        <title>Large-scale phosphoproteome analysis of human liver tissue by enrichment and fractionation of phosphopeptides with strong anion exchange chromatography.</title>
        <authorList>
            <person name="Han G."/>
            <person name="Ye M."/>
            <person name="Zhou H."/>
            <person name="Jiang X."/>
            <person name="Feng S."/>
            <person name="Jiang X."/>
            <person name="Tian R."/>
            <person name="Wan D."/>
            <person name="Zou H."/>
            <person name="Gu J."/>
        </authorList>
    </citation>
    <scope>PHOSPHORYLATION [LARGE SCALE ANALYSIS] AT SER-188</scope>
    <scope>IDENTIFICATION BY MASS SPECTROMETRY [LARGE SCALE ANALYSIS]</scope>
    <source>
        <tissue>Liver</tissue>
    </source>
</reference>
<reference key="18">
    <citation type="journal article" date="2009" name="J. Biol. Chem.">
        <title>Identification and characterization of a novel nuclear protein complex involved in nuclear hormone receptor-mediated gene regulation.</title>
        <authorList>
            <person name="Garapaty S."/>
            <person name="Xu C.F."/>
            <person name="Trojer P."/>
            <person name="Mahajan M.A."/>
            <person name="Neubert T.A."/>
            <person name="Samuels H.H."/>
        </authorList>
    </citation>
    <scope>IDENTIFICATION IN A COMPLEX WITH ZNF335; MKI67; EMSY; ZNF335; HSPA8; TUBB2A; CCAR2; ASH2L; RBBP5 AND WDR5</scope>
</reference>
<reference key="19">
    <citation type="journal article" date="2009" name="Sci. Signal.">
        <title>Quantitative phosphoproteomic analysis of T cell receptor signaling reveals system-wide modulation of protein-protein interactions.</title>
        <authorList>
            <person name="Mayya V."/>
            <person name="Lundgren D.H."/>
            <person name="Hwang S.-I."/>
            <person name="Rezaul K."/>
            <person name="Wu L."/>
            <person name="Eng J.K."/>
            <person name="Rodionov V."/>
            <person name="Han D.K."/>
        </authorList>
    </citation>
    <scope>PHOSPHORYLATION [LARGE SCALE ANALYSIS] AT SER-22 AND SER-118</scope>
    <scope>IDENTIFICATION BY MASS SPECTROMETRY [LARGE SCALE ANALYSIS]</scope>
    <source>
        <tissue>Leukemic T-cell</tissue>
    </source>
</reference>
<reference key="20">
    <citation type="journal article" date="2009" name="Science">
        <title>Lysine acetylation targets protein complexes and co-regulates major cellular functions.</title>
        <authorList>
            <person name="Choudhary C."/>
            <person name="Kumar C."/>
            <person name="Gnad F."/>
            <person name="Nielsen M.L."/>
            <person name="Rehman M."/>
            <person name="Walther T.C."/>
            <person name="Olsen J.V."/>
            <person name="Mann M."/>
        </authorList>
    </citation>
    <scope>ACETYLATION [LARGE SCALE ANALYSIS] AT LYS-3; LYS-522; LYS-571 AND LYS-836</scope>
    <scope>IDENTIFICATION BY MASS SPECTROMETRY [LARGE SCALE ANALYSIS]</scope>
</reference>
<reference key="21">
    <citation type="journal article" date="2010" name="Sci. Signal.">
        <title>Quantitative phosphoproteomics reveals widespread full phosphorylation site occupancy during mitosis.</title>
        <authorList>
            <person name="Olsen J.V."/>
            <person name="Vermeulen M."/>
            <person name="Santamaria A."/>
            <person name="Kumar C."/>
            <person name="Miller M.L."/>
            <person name="Jensen L.J."/>
            <person name="Gnad F."/>
            <person name="Cox J."/>
            <person name="Jensen T.S."/>
            <person name="Nigg E.A."/>
            <person name="Brunak S."/>
            <person name="Mann M."/>
        </authorList>
    </citation>
    <scope>PHOSPHORYLATION [LARGE SCALE ANALYSIS] AT SER-4; SER-14; SER-41; SER-188; SER-195; SER-206; SER-208; SER-533; SER-598; SER-604; SER-606; SER-689 AND SER-766</scope>
    <scope>IDENTIFICATION BY MASS SPECTROMETRY [LARGE SCALE ANALYSIS]</scope>
    <source>
        <tissue>Cervix carcinoma</tissue>
    </source>
</reference>
<reference key="22">
    <citation type="journal article" date="2011" name="BMC Syst. Biol.">
        <title>Initial characterization of the human central proteome.</title>
        <authorList>
            <person name="Burkard T.R."/>
            <person name="Planyavsky M."/>
            <person name="Kaupe I."/>
            <person name="Breitwieser F.P."/>
            <person name="Buerckstuemmer T."/>
            <person name="Bennett K.L."/>
            <person name="Superti-Furga G."/>
            <person name="Colinge J."/>
        </authorList>
    </citation>
    <scope>IDENTIFICATION BY MASS SPECTROMETRY [LARGE SCALE ANALYSIS]</scope>
</reference>
<reference key="23">
    <citation type="journal article" date="2011" name="Sci. Signal.">
        <title>System-wide temporal characterization of the proteome and phosphoproteome of human embryonic stem cell differentiation.</title>
        <authorList>
            <person name="Rigbolt K.T."/>
            <person name="Prokhorova T.A."/>
            <person name="Akimov V."/>
            <person name="Henningsen J."/>
            <person name="Johansen P.T."/>
            <person name="Kratchmarova I."/>
            <person name="Kassem M."/>
            <person name="Mann M."/>
            <person name="Olsen J.V."/>
            <person name="Blagoev B."/>
        </authorList>
    </citation>
    <scope>PHOSPHORYLATION [LARGE SCALE ANALYSIS] AT SER-4; SER-9; SER-188; SER-195; SER-206; SER-208; TYR-219; SER-533; SER-596; SER-598; SER-604; THR-741; SER-747 AND SER-766</scope>
    <scope>IDENTIFICATION BY MASS SPECTROMETRY [LARGE SCALE ANALYSIS]</scope>
</reference>
<reference key="24">
    <citation type="journal article" date="2012" name="Proc. Natl. Acad. Sci. U.S.A.">
        <title>N-terminal acetylome analyses and functional insights of the N-terminal acetyltransferase NatB.</title>
        <authorList>
            <person name="Van Damme P."/>
            <person name="Lasa M."/>
            <person name="Polevoda B."/>
            <person name="Gazquez C."/>
            <person name="Elosegui-Artola A."/>
            <person name="Kim D.S."/>
            <person name="De Juan-Pardo E."/>
            <person name="Demeyer K."/>
            <person name="Hole K."/>
            <person name="Larrea E."/>
            <person name="Timmerman E."/>
            <person name="Prieto J."/>
            <person name="Arnesen T."/>
            <person name="Sherman F."/>
            <person name="Gevaert K."/>
            <person name="Aldabe R."/>
        </authorList>
    </citation>
    <scope>ACETYLATION [LARGE SCALE ANALYSIS] AT SER-2</scope>
    <scope>CLEAVAGE OF INITIATOR METHIONINE [LARGE SCALE ANALYSIS]</scope>
    <scope>IDENTIFICATION BY MASS SPECTROMETRY [LARGE SCALE ANALYSIS]</scope>
</reference>
<reference key="25">
    <citation type="journal article" date="2013" name="J. Proteome Res.">
        <title>Toward a comprehensive characterization of a human cancer cell phosphoproteome.</title>
        <authorList>
            <person name="Zhou H."/>
            <person name="Di Palma S."/>
            <person name="Preisinger C."/>
            <person name="Peng M."/>
            <person name="Polat A.N."/>
            <person name="Heck A.J."/>
            <person name="Mohammed S."/>
        </authorList>
    </citation>
    <scope>PHOSPHORYLATION [LARGE SCALE ANALYSIS] AT SER-4; SER-9; SER-11; SER-14; SER-118; SER-126; THR-150; SER-157; TYR-158; SER-164; SER-188; SER-195; TYR-202; SER-206; SER-211; SER-234; SER-264; SER-275; SER-509; SER-511; SER-533; SER-598; SER-604 AND SER-766</scope>
    <scope>IDENTIFICATION BY MASS SPECTROMETRY [LARGE SCALE ANALYSIS]</scope>
    <source>
        <tissue>Cervix carcinoma</tissue>
        <tissue>Erythroleukemia</tissue>
    </source>
</reference>
<reference key="26">
    <citation type="journal article" date="2014" name="J. Proteomics">
        <title>An enzyme assisted RP-RPLC approach for in-depth analysis of human liver phosphoproteome.</title>
        <authorList>
            <person name="Bian Y."/>
            <person name="Song C."/>
            <person name="Cheng K."/>
            <person name="Dong M."/>
            <person name="Wang F."/>
            <person name="Huang J."/>
            <person name="Sun D."/>
            <person name="Wang L."/>
            <person name="Ye M."/>
            <person name="Zou H."/>
        </authorList>
    </citation>
    <scope>PHOSPHORYLATION [LARGE SCALE ANALYSIS] AT SER-4; THR-150; SER-188; SER-206; SER-598; SER-604; SER-654; SER-671; SER-673; SER-674 AND THR-679</scope>
    <scope>IDENTIFICATION BY MASS SPECTROMETRY [LARGE SCALE ANALYSIS]</scope>
    <source>
        <tissue>Liver</tissue>
    </source>
</reference>
<reference key="27">
    <citation type="journal article" date="2014" name="Nat. Neurosci.">
        <title>Mutations in the matrin 3 gene cause familial amyotrophic lateral sclerosis.</title>
        <authorList>
            <person name="Johnson J.O."/>
            <person name="Pioro E.P."/>
            <person name="Boehringer A."/>
            <person name="Chia R."/>
            <person name="Feit H."/>
            <person name="Renton A.E."/>
            <person name="Pliner H.A."/>
            <person name="Abramzon Y."/>
            <person name="Marangi G."/>
            <person name="Winborn B.J."/>
            <person name="Gibbs J.R."/>
            <person name="Nalls M.A."/>
            <person name="Morgan S."/>
            <person name="Shoai M."/>
            <person name="Hardy J."/>
            <person name="Pittman A."/>
            <person name="Orrell R.W."/>
            <person name="Malaspina A."/>
            <person name="Sidle K.C."/>
            <person name="Fratta P."/>
            <person name="Harms M.B."/>
            <person name="Baloh R.H."/>
            <person name="Pestronk A."/>
            <person name="Weihl C.C."/>
            <person name="Rogaeva E."/>
            <person name="Zinman L."/>
            <person name="Drory V.E."/>
            <person name="Borghero G."/>
            <person name="Mora G."/>
            <person name="Calvo A."/>
            <person name="Rothstein J.D."/>
            <person name="Drepper C."/>
            <person name="Sendtner M."/>
            <person name="Singleton A.B."/>
            <person name="Taylor J.P."/>
            <person name="Cookson M.R."/>
            <person name="Restagno G."/>
            <person name="Sabatelli M."/>
            <person name="Bowser R."/>
            <person name="Chio A."/>
            <person name="Traynor B.J."/>
        </authorList>
    </citation>
    <scope>INTERACTION WITH TARDBP</scope>
    <scope>VARIANTS ALS21 CYS-85; CYS-115; SER-154 AND ALA-622</scope>
    <scope>CHARACTERIZATION OF VARIANT ALS21 CYS-85</scope>
</reference>
<reference key="28">
    <citation type="journal article" date="2014" name="Nat. Struct. Mol. Biol.">
        <title>Uncovering global SUMOylation signaling networks in a site-specific manner.</title>
        <authorList>
            <person name="Hendriks I.A."/>
            <person name="D'Souza R.C."/>
            <person name="Yang B."/>
            <person name="Verlaan-de Vries M."/>
            <person name="Mann M."/>
            <person name="Vertegaal A.C."/>
        </authorList>
    </citation>
    <scope>SUMOYLATION [LARGE SCALE ANALYSIS] AT LYS-3; LYS-487; LYS-491; LYS-617; LYS-719 AND LYS-736</scope>
    <scope>IDENTIFICATION BY MASS SPECTROMETRY [LARGE SCALE ANALYSIS]</scope>
</reference>
<reference key="29">
    <citation type="journal article" date="2015" name="Cell Rep.">
        <title>SUMO-2 orchestrates chromatin modifiers in response to DNA damage.</title>
        <authorList>
            <person name="Hendriks I.A."/>
            <person name="Treffers L.W."/>
            <person name="Verlaan-de Vries M."/>
            <person name="Olsen J.V."/>
            <person name="Vertegaal A.C."/>
        </authorList>
    </citation>
    <scope>SUMOYLATION [LARGE SCALE ANALYSIS] AT LYS-487 AND LYS-491</scope>
    <scope>IDENTIFICATION BY MASS SPECTROMETRY [LARGE SCALE ANALYSIS]</scope>
</reference>
<reference key="30">
    <citation type="journal article" date="2015" name="Mol. Cell. Proteomics">
        <title>System-wide analysis of SUMOylation dynamics in response to replication stress reveals novel small ubiquitin-like modified target proteins and acceptor lysines relevant for genome stability.</title>
        <authorList>
            <person name="Xiao Z."/>
            <person name="Chang J.G."/>
            <person name="Hendriks I.A."/>
            <person name="Sigurdsson J.O."/>
            <person name="Olsen J.V."/>
            <person name="Vertegaal A.C."/>
        </authorList>
    </citation>
    <scope>SUMOYLATION [LARGE SCALE ANALYSIS] AT LYS-3; LYS-146; LYS-491; LYS-554 AND LYS-617</scope>
    <scope>IDENTIFICATION BY MASS SPECTROMETRY [LARGE SCALE ANALYSIS]</scope>
</reference>
<reference key="31">
    <citation type="journal article" date="2015" name="Proteomics">
        <title>N-terminome analysis of the human mitochondrial proteome.</title>
        <authorList>
            <person name="Vaca Jacome A.S."/>
            <person name="Rabilloud T."/>
            <person name="Schaeffer-Reiss C."/>
            <person name="Rompais M."/>
            <person name="Ayoub D."/>
            <person name="Lane L."/>
            <person name="Bairoch A."/>
            <person name="Van Dorsselaer A."/>
            <person name="Carapito C."/>
        </authorList>
    </citation>
    <scope>IDENTIFICATION BY MASS SPECTROMETRY [LARGE SCALE ANALYSIS]</scope>
</reference>
<reference key="32">
    <citation type="journal article" date="2016" name="Sci. Rep.">
        <title>FUS interacts with nuclear matrix-associated protein SAFB1 as well as Matrin3 to regulate splicing and ligand-mediated transcription.</title>
        <authorList>
            <person name="Yamaguchi A."/>
            <person name="Takanashi K."/>
        </authorList>
    </citation>
    <scope>INTERACTION WITH FUS</scope>
</reference>
<reference key="33">
    <citation type="journal article" date="2017" name="Mol. Cell">
        <title>A Compendium of RNA-Binding Proteins that Regulate MicroRNA Biogenesis.</title>
        <authorList>
            <person name="Treiber T."/>
            <person name="Treiber N."/>
            <person name="Plessmann U."/>
            <person name="Harlander S."/>
            <person name="Daiss J.L."/>
            <person name="Eichner N."/>
            <person name="Lehmann G."/>
            <person name="Schall K."/>
            <person name="Urlaub H."/>
            <person name="Meister G."/>
        </authorList>
    </citation>
    <scope>FUNCTION</scope>
    <scope>MIRNA-BINDING</scope>
</reference>
<reference key="34">
    <citation type="journal article" date="2017" name="Mol. Cell">
        <title>HEXIM1 and NEAT1 Long non-coding RNA form a multi-subunit complex that regulates DNA-mediated innate immune response.</title>
        <authorList>
            <person name="Morchikh M."/>
            <person name="Cribier A."/>
            <person name="Raffel R."/>
            <person name="Amraoui S."/>
            <person name="Cau J."/>
            <person name="Severac D."/>
            <person name="Dubois E."/>
            <person name="Schwartz O."/>
            <person name="Bennasser Y."/>
            <person name="Benkirane M."/>
        </authorList>
    </citation>
    <scope>FUNCTION</scope>
    <scope>SUBCELLULAR LOCATION</scope>
    <scope>INTERACTION WITH PRKDC; XRCC5; XRCC6; SFPQ; NONO; PSPC1; RBM14 AND HEXIM1</scope>
</reference>
<reference key="35">
    <citation type="journal article" date="2017" name="Nat. Struct. Mol. Biol.">
        <title>Site-specific mapping of the human SUMO proteome reveals co-modification with phosphorylation.</title>
        <authorList>
            <person name="Hendriks I.A."/>
            <person name="Lyon D."/>
            <person name="Young C."/>
            <person name="Jensen L.J."/>
            <person name="Vertegaal A.C."/>
            <person name="Nielsen M.L."/>
        </authorList>
    </citation>
    <scope>SUMOYLATION [LARGE SCALE ANALYSIS] AT LYS-3; LYS-132; LYS-146; LYS-245; LYS-269; LYS-478; LYS-487; LYS-491; LYS-515; LYS-522; LYS-554; LYS-555; LYS-617; LYS-630; LYS-719; LYS-736; LYS-770 AND LYS-836</scope>
    <scope>IDENTIFICATION BY MASS SPECTROMETRY [LARGE SCALE ANALYSIS]</scope>
</reference>
<reference key="36">
    <citation type="journal article" date="2018" name="Nat. Cell Biol.">
        <title>Recognition of RNA N6-methyladenosine by IGF2BP proteins enhances mRNA stability and translation.</title>
        <authorList>
            <person name="Huang H."/>
            <person name="Weng H."/>
            <person name="Sun W."/>
            <person name="Qin X."/>
            <person name="Shi H."/>
            <person name="Wu H."/>
            <person name="Zhao B.S."/>
            <person name="Mesquita A."/>
            <person name="Liu C."/>
            <person name="Yuan C.L."/>
            <person name="Hu Y.C."/>
            <person name="Huettelmaier S."/>
            <person name="Skibbe J.R."/>
            <person name="Su R."/>
            <person name="Deng X."/>
            <person name="Dong L."/>
            <person name="Sun M."/>
            <person name="Li C."/>
            <person name="Nachtergaele S."/>
            <person name="Wang Y."/>
            <person name="Hu C."/>
            <person name="Ferchen K."/>
            <person name="Greis K.D."/>
            <person name="Jiang X."/>
            <person name="Wei M."/>
            <person name="Qu L."/>
            <person name="Guan J.L."/>
            <person name="He C."/>
            <person name="Yang J."/>
            <person name="Chen J."/>
        </authorList>
    </citation>
    <scope>INTERACTION WITH IGF2BP1; IGF2BP2 AND IGF2BP3</scope>
</reference>
<reference key="37">
    <citation type="journal article" date="2020" name="Nat. Commun.">
        <title>An oncopeptide regulates m6A recognition by the m6A reader IGF2BP1 and tumorigenesis.</title>
        <authorList>
            <person name="Zhu S."/>
            <person name="Wang J.Z."/>
            <person name="Chen D."/>
            <person name="He Y.T."/>
            <person name="Meng N."/>
            <person name="Chen M."/>
            <person name="Lu R.X."/>
            <person name="Chen X.H."/>
            <person name="Zhang X.L."/>
            <person name="Yan G.R."/>
        </authorList>
    </citation>
    <scope>FUNCTION</scope>
    <scope>INTERACTION WITH IGF2BP1</scope>
</reference>
<reference key="38">
    <citation type="journal article" date="2023" name="Nucleic Acids Res.">
        <title>Cell-type specific regulator RBPMS switches alternative splicing via higher-order oligomerization and heterotypic interactions with other splicing regulators.</title>
        <authorList>
            <person name="Yang Y."/>
            <person name="Lee G.C."/>
            <person name="Nakagaki-Silva E."/>
            <person name="Huang Y."/>
            <person name="Peacey M."/>
            <person name="Partridge R."/>
            <person name="Gooding C."/>
            <person name="Smith C.W.J."/>
        </authorList>
    </citation>
    <scope>INTERACTION WITH RBPMS</scope>
</reference>
<reference key="39">
    <citation type="journal article" date="2009" name="Am. J. Hum. Genet.">
        <title>Autosomal-dominant distal myopathy associated with a recurrent missense mutation in the gene encoding the nuclear matrix protein, matrin 3.</title>
        <authorList>
            <person name="Senderek J."/>
            <person name="Garvey S.M."/>
            <person name="Krieger M."/>
            <person name="Guergueltcheva V."/>
            <person name="Urtizberea A."/>
            <person name="Roos A."/>
            <person name="Elbracht M."/>
            <person name="Stendel C."/>
            <person name="Tournev I."/>
            <person name="Mihailova V."/>
            <person name="Feit H."/>
            <person name="Tramonte J."/>
            <person name="Hedera P."/>
            <person name="Crooks K."/>
            <person name="Bergmann C."/>
            <person name="Rudnik-Schoeneborn S."/>
            <person name="Zerres K."/>
            <person name="Lochmueller H."/>
            <person name="Seboun E."/>
            <person name="Weis J."/>
            <person name="Beckmann J.S."/>
            <person name="Hauser M.A."/>
            <person name="Jackson C.E."/>
        </authorList>
    </citation>
    <scope>VARIANT ALS21 CYS-85</scope>
</reference>
<reference key="40">
    <citation type="journal article" date="2015" name="Amyotroph. Lateral Scler. Frontotemporal Degener.">
        <title>A novel Arg147Trp MATR3 missense mutation in a slowly progressive ALS Italian patient.</title>
        <authorList>
            <person name="Origone P."/>
            <person name="Verdiani S."/>
            <person name="Bandettini Di Poggio M."/>
            <person name="Zuccarino R."/>
            <person name="Vignolo M."/>
            <person name="Caponnetto C."/>
            <person name="Mandich P."/>
        </authorList>
    </citation>
    <scope>VARIANT ALS21 TRP-147</scope>
</reference>
<reference key="41">
    <citation type="journal article" date="2015" name="Neurobiol. Aging">
        <title>Mutational analysis of MATR3 in Taiwanese patients with amyotrophic lateral sclerosis.</title>
        <authorList>
            <person name="Lin K.P."/>
            <person name="Tsai P.C."/>
            <person name="Liao Y.C."/>
            <person name="Chen W.T."/>
            <person name="Tsai C.P."/>
            <person name="Soong B.W."/>
            <person name="Lee Y.C."/>
        </authorList>
    </citation>
    <scope>VARIANTS VAL-89; ALA-664 AND SER-787</scope>
    <scope>VARIANT ALS21 THR-72</scope>
</reference>
<comment type="function">
    <text evidence="6 14 15 17">May play a role in transcription or may interact with other nuclear matrix proteins to form the internal fibrogranular network. In association with the SFPQ-NONO heteromer may play a role in nuclear retention of defective RNAs. Plays a role in the regulation of DNA virus-mediated innate immune response by assembling into the HDP-RNP complex, a complex that serves as a platform for IRF3 phosphorylation and subsequent innate immune response activation through the cGAS-STING pathway (PubMed:28712728). Binds to N6-methyladenosine (m6A)-containing mRNAs and contributes to MYC stability by binding to m6A-containing MYC mRNAs (PubMed:32245947). May bind to specific miRNA hairpins (PubMed:28431233).</text>
</comment>
<comment type="subunit">
    <text evidence="6 7 8 10 13 15 16 17 18">Part of a complex consisting of SFPQ, NONO and MATR3. Interacts with AGO1 and AGO2. Part of a complex composed at least of ASH2L, EMSY, HCFC1, HSPA8, CCAR2, MATR3, MKI67, RBBP5, TUBB2A, WDR5 and ZNF335; this complex may have a histone H3-specific methyltransferase activity. Interacts with TARDBP. Part of the HDP-RNP complex composed of at least HEXIM1, PRKDC, XRCC5, XRCC6, paraspeckle proteins (SFPQ, NONO, PSPC1, RBM14, and MATR3) and NEAT1 RNA (PubMed:28712728). Interacts with FUS. Interacts with IGF2BP1; the interaction is enhanced by SEPIN14P20 peptide RBPR (PubMed:29476152, PubMed:32245947). Interacts with IGF2BP2 and IGF2BP3 (PubMed:29476152). Interacts with RBPMS (PubMed:37548402).</text>
</comment>
<comment type="interaction">
    <interactant intactId="EBI-352602">
        <id>P43243</id>
    </interactant>
    <interactant intactId="EBI-529989">
        <id>Q9NRI5</id>
        <label>DISC1</label>
    </interactant>
    <organismsDiffer>false</organismsDiffer>
    <experiments>3</experiments>
</comment>
<comment type="interaction">
    <interactant intactId="EBI-352602">
        <id>P43243</id>
    </interactant>
    <interactant intactId="EBI-304185">
        <id>P61978</id>
        <label>HNRNPK</label>
    </interactant>
    <organismsDiffer>false</organismsDiffer>
    <experiments>4</experiments>
</comment>
<comment type="interaction">
    <interactant intactId="EBI-352602">
        <id>P43243</id>
    </interactant>
    <interactant intactId="EBI-7060731">
        <id>P61978-2</id>
        <label>HNRNPK</label>
    </interactant>
    <organismsDiffer>false</organismsDiffer>
    <experiments>4</experiments>
</comment>
<comment type="interaction">
    <interactant intactId="EBI-352602">
        <id>P43243</id>
    </interactant>
    <interactant intactId="EBI-2625020">
        <id>P34969</id>
        <label>HTR7</label>
    </interactant>
    <organismsDiffer>false</organismsDiffer>
    <experiments>2</experiments>
</comment>
<comment type="interaction">
    <interactant intactId="EBI-352602">
        <id>P43243</id>
    </interactant>
    <interactant intactId="EBI-466029">
        <id>P42858</id>
        <label>HTT</label>
    </interactant>
    <organismsDiffer>false</organismsDiffer>
    <experiments>4</experiments>
</comment>
<comment type="interaction">
    <interactant intactId="EBI-352602">
        <id>P43243</id>
    </interactant>
    <interactant intactId="EBI-3044087">
        <id>Q7Z3Y8</id>
        <label>KRT27</label>
    </interactant>
    <organismsDiffer>false</organismsDiffer>
    <experiments>3</experiments>
</comment>
<comment type="interaction">
    <interactant intactId="EBI-352602">
        <id>P43243</id>
    </interactant>
    <interactant intactId="EBI-1047093">
        <id>O76011</id>
        <label>KRT34</label>
    </interactant>
    <organismsDiffer>false</organismsDiffer>
    <experiments>3</experiments>
</comment>
<comment type="interaction">
    <interactant intactId="EBI-352602">
        <id>P43243</id>
    </interactant>
    <interactant intactId="EBI-352602">
        <id>P43243</id>
        <label>MATR3</label>
    </interactant>
    <organismsDiffer>false</organismsDiffer>
    <experiments>4</experiments>
</comment>
<comment type="interaction">
    <interactant intactId="EBI-352602">
        <id>P43243</id>
    </interactant>
    <interactant intactId="EBI-721550">
        <id>P22736</id>
        <label>NR4A1</label>
    </interactant>
    <organismsDiffer>false</organismsDiffer>
    <experiments>2</experiments>
</comment>
<comment type="interaction">
    <interactant intactId="EBI-352602">
        <id>P43243</id>
    </interactant>
    <interactant intactId="EBI-11983983">
        <id>P57721-2</id>
        <label>PCBP3</label>
    </interactant>
    <organismsDiffer>false</organismsDiffer>
    <experiments>3</experiments>
</comment>
<comment type="interaction">
    <interactant intactId="EBI-352602">
        <id>P43243</id>
    </interactant>
    <interactant intactId="EBI-949255">
        <id>Q58EX7</id>
        <label>PLEKHG4</label>
    </interactant>
    <organismsDiffer>false</organismsDiffer>
    <experiments>3</experiments>
</comment>
<comment type="interaction">
    <interactant intactId="EBI-352602">
        <id>P43243</id>
    </interactant>
    <interactant intactId="EBI-12255608">
        <id>Q9UKA9-2</id>
        <label>PTBP2</label>
    </interactant>
    <organismsDiffer>false</organismsDiffer>
    <experiments>3</experiments>
</comment>
<comment type="interaction">
    <interactant intactId="EBI-352602">
        <id>P43243</id>
    </interactant>
    <interactant intactId="EBI-740818">
        <id>Q9Y272</id>
        <label>RASD1</label>
    </interactant>
    <organismsDiffer>false</organismsDiffer>
    <experiments>6</experiments>
</comment>
<comment type="interaction">
    <interactant intactId="EBI-352602">
        <id>P43243</id>
    </interactant>
    <interactant intactId="EBI-2512147">
        <id>Q8IUH3</id>
        <label>RBM45</label>
    </interactant>
    <organismsDiffer>false</organismsDiffer>
    <experiments>5</experiments>
</comment>
<comment type="interaction">
    <interactant intactId="EBI-352602">
        <id>P43243</id>
    </interactant>
    <interactant intactId="EBI-372899">
        <id>Q13148</id>
        <label>TARDBP</label>
    </interactant>
    <organismsDiffer>false</organismsDiffer>
    <experiments>6</experiments>
</comment>
<comment type="interaction">
    <interactant intactId="EBI-352602">
        <id>P43243</id>
    </interactant>
    <interactant intactId="EBI-359224">
        <id>Q13077</id>
        <label>TRAF1</label>
    </interactant>
    <organismsDiffer>false</organismsDiffer>
    <experiments>3</experiments>
</comment>
<comment type="interaction">
    <interactant intactId="EBI-352602">
        <id>P43243</id>
    </interactant>
    <interactant intactId="EBI-744794">
        <id>Q9BZW7</id>
        <label>TSGA10</label>
    </interactant>
    <organismsDiffer>false</organismsDiffer>
    <experiments>3</experiments>
</comment>
<comment type="subcellular location">
    <subcellularLocation>
        <location>Nucleus matrix</location>
    </subcellularLocation>
</comment>
<comment type="alternative products">
    <event type="alternative splicing"/>
    <isoform>
        <id>P43243-1</id>
        <name>1</name>
        <sequence type="displayed"/>
    </isoform>
    <isoform>
        <id>P43243-2</id>
        <name>2</name>
        <sequence type="described" ref="VSP_042624"/>
    </isoform>
</comment>
<comment type="disease" evidence="9 10 11 12">
    <disease id="DI-02625">
        <name>Amyotrophic lateral sclerosis 21</name>
        <acronym>ALS21</acronym>
        <description>A neurodegenerative disorder affecting upper and lower motor neurons, resulting in muscle weakness and respiratory failure. Some patients may develop myopathic features or dementia.</description>
        <dbReference type="MIM" id="606070"/>
    </disease>
    <text>The disease is caused by variants affecting the gene represented in this entry.</text>
</comment>
<comment type="sequence caution" evidence="21">
    <conflict type="frameshift">
        <sequence resource="EMBL-CDS" id="AAF17217"/>
    </conflict>
</comment>
<comment type="sequence caution" evidence="21">
    <conflict type="erroneous initiation">
        <sequence resource="EMBL-CDS" id="BAA34443"/>
    </conflict>
    <text>Extended N-terminus.</text>
</comment>